<gene>
    <name type="primary">Or59c</name>
    <name type="ORF">CG17226</name>
</gene>
<feature type="chain" id="PRO_0000174257" description="Putative odorant receptor 59c">
    <location>
        <begin position="1"/>
        <end position="411"/>
    </location>
</feature>
<feature type="topological domain" description="Cytoplasmic" evidence="2">
    <location>
        <begin position="1"/>
        <end position="46"/>
    </location>
</feature>
<feature type="transmembrane region" description="Helical; Name=1" evidence="2">
    <location>
        <begin position="47"/>
        <end position="67"/>
    </location>
</feature>
<feature type="topological domain" description="Extracellular" evidence="2">
    <location>
        <begin position="68"/>
        <end position="86"/>
    </location>
</feature>
<feature type="transmembrane region" description="Helical; Name=2" evidence="2">
    <location>
        <begin position="87"/>
        <end position="107"/>
    </location>
</feature>
<feature type="topological domain" description="Cytoplasmic" evidence="2">
    <location>
        <begin position="108"/>
        <end position="139"/>
    </location>
</feature>
<feature type="transmembrane region" description="Helical; Name=3" evidence="2">
    <location>
        <begin position="140"/>
        <end position="160"/>
    </location>
</feature>
<feature type="topological domain" description="Extracellular" evidence="2">
    <location>
        <begin position="161"/>
        <end position="185"/>
    </location>
</feature>
<feature type="transmembrane region" description="Helical; Name=4" evidence="2">
    <location>
        <begin position="186"/>
        <end position="206"/>
    </location>
</feature>
<feature type="topological domain" description="Cytoplasmic" evidence="2">
    <location>
        <begin position="207"/>
        <end position="271"/>
    </location>
</feature>
<feature type="transmembrane region" description="Helical; Name=5" evidence="2">
    <location>
        <begin position="272"/>
        <end position="292"/>
    </location>
</feature>
<feature type="topological domain" description="Extracellular" evidence="2">
    <location>
        <begin position="293"/>
        <end position="296"/>
    </location>
</feature>
<feature type="transmembrane region" description="Helical; Name=6" evidence="2">
    <location>
        <begin position="297"/>
        <end position="317"/>
    </location>
</feature>
<feature type="topological domain" description="Cytoplasmic" evidence="2">
    <location>
        <begin position="318"/>
        <end position="369"/>
    </location>
</feature>
<feature type="transmembrane region" description="Helical; Name=7" evidence="2">
    <location>
        <begin position="370"/>
        <end position="390"/>
    </location>
</feature>
<feature type="topological domain" description="Extracellular" evidence="2">
    <location>
        <begin position="391"/>
        <end position="411"/>
    </location>
</feature>
<evidence type="ECO:0000250" key="1"/>
<evidence type="ECO:0000255" key="2"/>
<evidence type="ECO:0000269" key="3">
    <source>
    </source>
</evidence>
<evidence type="ECO:0000305" key="4"/>
<protein>
    <recommendedName>
        <fullName>Putative odorant receptor 59c</fullName>
    </recommendedName>
</protein>
<dbReference type="EMBL" id="AE013599">
    <property type="protein sequence ID" value="AAF47009.1"/>
    <property type="molecule type" value="Genomic_DNA"/>
</dbReference>
<dbReference type="RefSeq" id="NP_523823.1">
    <property type="nucleotide sequence ID" value="NM_079099.2"/>
</dbReference>
<dbReference type="SMR" id="Q9W1P7"/>
<dbReference type="BioGRID" id="63317">
    <property type="interactions" value="3"/>
</dbReference>
<dbReference type="DIP" id="DIP-22602N"/>
<dbReference type="FunCoup" id="Q9W1P7">
    <property type="interactions" value="42"/>
</dbReference>
<dbReference type="IntAct" id="Q9W1P7">
    <property type="interactions" value="1"/>
</dbReference>
<dbReference type="STRING" id="7227.FBpp0071929"/>
<dbReference type="PaxDb" id="7227-FBpp0071929"/>
<dbReference type="EnsemblMetazoa" id="FBtr0072020">
    <property type="protein sequence ID" value="FBpp0071929"/>
    <property type="gene ID" value="FBgn0034866"/>
</dbReference>
<dbReference type="GeneID" id="37716"/>
<dbReference type="KEGG" id="dme:Dmel_CG17226"/>
<dbReference type="AGR" id="FB:FBgn0034866"/>
<dbReference type="CTD" id="37716"/>
<dbReference type="FlyBase" id="FBgn0034866">
    <property type="gene designation" value="Or59c"/>
</dbReference>
<dbReference type="VEuPathDB" id="VectorBase:FBgn0034866"/>
<dbReference type="GeneTree" id="ENSGT00540000073151"/>
<dbReference type="HOGENOM" id="CLU_033399_8_0_1"/>
<dbReference type="InParanoid" id="Q9W1P7"/>
<dbReference type="OMA" id="FIVAICT"/>
<dbReference type="OrthoDB" id="6604226at2759"/>
<dbReference type="PhylomeDB" id="Q9W1P7"/>
<dbReference type="BioGRID-ORCS" id="37716">
    <property type="hits" value="0 hits in 1 CRISPR screen"/>
</dbReference>
<dbReference type="GenomeRNAi" id="37716"/>
<dbReference type="PRO" id="PR:Q9W1P7"/>
<dbReference type="Proteomes" id="UP000000803">
    <property type="component" value="Chromosome 2R"/>
</dbReference>
<dbReference type="Bgee" id="FBgn0034866">
    <property type="expression patterns" value="Expressed in maxillary palpus (Drosophila) and 4 other cell types or tissues"/>
</dbReference>
<dbReference type="ExpressionAtlas" id="Q9W1P7">
    <property type="expression patterns" value="baseline and differential"/>
</dbReference>
<dbReference type="GO" id="GO:0032590">
    <property type="term" value="C:dendrite membrane"/>
    <property type="evidence" value="ECO:0000250"/>
    <property type="project" value="FlyBase"/>
</dbReference>
<dbReference type="GO" id="GO:0016020">
    <property type="term" value="C:membrane"/>
    <property type="evidence" value="ECO:0000303"/>
    <property type="project" value="UniProtKB"/>
</dbReference>
<dbReference type="GO" id="GO:0005886">
    <property type="term" value="C:plasma membrane"/>
    <property type="evidence" value="ECO:0000318"/>
    <property type="project" value="GO_Central"/>
</dbReference>
<dbReference type="GO" id="GO:0005549">
    <property type="term" value="F:odorant binding"/>
    <property type="evidence" value="ECO:0000250"/>
    <property type="project" value="FlyBase"/>
</dbReference>
<dbReference type="GO" id="GO:0004984">
    <property type="term" value="F:olfactory receptor activity"/>
    <property type="evidence" value="ECO:0000318"/>
    <property type="project" value="GO_Central"/>
</dbReference>
<dbReference type="GO" id="GO:0050911">
    <property type="term" value="P:detection of chemical stimulus involved in sensory perception of smell"/>
    <property type="evidence" value="ECO:0000318"/>
    <property type="project" value="GO_Central"/>
</dbReference>
<dbReference type="GO" id="GO:0007608">
    <property type="term" value="P:sensory perception of smell"/>
    <property type="evidence" value="ECO:0000303"/>
    <property type="project" value="UniProtKB"/>
</dbReference>
<dbReference type="GO" id="GO:0007165">
    <property type="term" value="P:signal transduction"/>
    <property type="evidence" value="ECO:0007669"/>
    <property type="project" value="UniProtKB-KW"/>
</dbReference>
<dbReference type="InterPro" id="IPR004117">
    <property type="entry name" value="7tm6_olfct_rcpt"/>
</dbReference>
<dbReference type="PANTHER" id="PTHR21137">
    <property type="entry name" value="ODORANT RECEPTOR"/>
    <property type="match status" value="1"/>
</dbReference>
<dbReference type="PANTHER" id="PTHR21137:SF35">
    <property type="entry name" value="ODORANT RECEPTOR 19A-RELATED"/>
    <property type="match status" value="1"/>
</dbReference>
<dbReference type="Pfam" id="PF02949">
    <property type="entry name" value="7tm_6"/>
    <property type="match status" value="1"/>
</dbReference>
<accession>Q9W1P7</accession>
<reference key="1">
    <citation type="journal article" date="2000" name="Science">
        <title>The genome sequence of Drosophila melanogaster.</title>
        <authorList>
            <person name="Adams M.D."/>
            <person name="Celniker S.E."/>
            <person name="Holt R.A."/>
            <person name="Evans C.A."/>
            <person name="Gocayne J.D."/>
            <person name="Amanatides P.G."/>
            <person name="Scherer S.E."/>
            <person name="Li P.W."/>
            <person name="Hoskins R.A."/>
            <person name="Galle R.F."/>
            <person name="George R.A."/>
            <person name="Lewis S.E."/>
            <person name="Richards S."/>
            <person name="Ashburner M."/>
            <person name="Henderson S.N."/>
            <person name="Sutton G.G."/>
            <person name="Wortman J.R."/>
            <person name="Yandell M.D."/>
            <person name="Zhang Q."/>
            <person name="Chen L.X."/>
            <person name="Brandon R.C."/>
            <person name="Rogers Y.-H.C."/>
            <person name="Blazej R.G."/>
            <person name="Champe M."/>
            <person name="Pfeiffer B.D."/>
            <person name="Wan K.H."/>
            <person name="Doyle C."/>
            <person name="Baxter E.G."/>
            <person name="Helt G."/>
            <person name="Nelson C.R."/>
            <person name="Miklos G.L.G."/>
            <person name="Abril J.F."/>
            <person name="Agbayani A."/>
            <person name="An H.-J."/>
            <person name="Andrews-Pfannkoch C."/>
            <person name="Baldwin D."/>
            <person name="Ballew R.M."/>
            <person name="Basu A."/>
            <person name="Baxendale J."/>
            <person name="Bayraktaroglu L."/>
            <person name="Beasley E.M."/>
            <person name="Beeson K.Y."/>
            <person name="Benos P.V."/>
            <person name="Berman B.P."/>
            <person name="Bhandari D."/>
            <person name="Bolshakov S."/>
            <person name="Borkova D."/>
            <person name="Botchan M.R."/>
            <person name="Bouck J."/>
            <person name="Brokstein P."/>
            <person name="Brottier P."/>
            <person name="Burtis K.C."/>
            <person name="Busam D.A."/>
            <person name="Butler H."/>
            <person name="Cadieu E."/>
            <person name="Center A."/>
            <person name="Chandra I."/>
            <person name="Cherry J.M."/>
            <person name="Cawley S."/>
            <person name="Dahlke C."/>
            <person name="Davenport L.B."/>
            <person name="Davies P."/>
            <person name="de Pablos B."/>
            <person name="Delcher A."/>
            <person name="Deng Z."/>
            <person name="Mays A.D."/>
            <person name="Dew I."/>
            <person name="Dietz S.M."/>
            <person name="Dodson K."/>
            <person name="Doup L.E."/>
            <person name="Downes M."/>
            <person name="Dugan-Rocha S."/>
            <person name="Dunkov B.C."/>
            <person name="Dunn P."/>
            <person name="Durbin K.J."/>
            <person name="Evangelista C.C."/>
            <person name="Ferraz C."/>
            <person name="Ferriera S."/>
            <person name="Fleischmann W."/>
            <person name="Fosler C."/>
            <person name="Gabrielian A.E."/>
            <person name="Garg N.S."/>
            <person name="Gelbart W.M."/>
            <person name="Glasser K."/>
            <person name="Glodek A."/>
            <person name="Gong F."/>
            <person name="Gorrell J.H."/>
            <person name="Gu Z."/>
            <person name="Guan P."/>
            <person name="Harris M."/>
            <person name="Harris N.L."/>
            <person name="Harvey D.A."/>
            <person name="Heiman T.J."/>
            <person name="Hernandez J.R."/>
            <person name="Houck J."/>
            <person name="Hostin D."/>
            <person name="Houston K.A."/>
            <person name="Howland T.J."/>
            <person name="Wei M.-H."/>
            <person name="Ibegwam C."/>
            <person name="Jalali M."/>
            <person name="Kalush F."/>
            <person name="Karpen G.H."/>
            <person name="Ke Z."/>
            <person name="Kennison J.A."/>
            <person name="Ketchum K.A."/>
            <person name="Kimmel B.E."/>
            <person name="Kodira C.D."/>
            <person name="Kraft C.L."/>
            <person name="Kravitz S."/>
            <person name="Kulp D."/>
            <person name="Lai Z."/>
            <person name="Lasko P."/>
            <person name="Lei Y."/>
            <person name="Levitsky A.A."/>
            <person name="Li J.H."/>
            <person name="Li Z."/>
            <person name="Liang Y."/>
            <person name="Lin X."/>
            <person name="Liu X."/>
            <person name="Mattei B."/>
            <person name="McIntosh T.C."/>
            <person name="McLeod M.P."/>
            <person name="McPherson D."/>
            <person name="Merkulov G."/>
            <person name="Milshina N.V."/>
            <person name="Mobarry C."/>
            <person name="Morris J."/>
            <person name="Moshrefi A."/>
            <person name="Mount S.M."/>
            <person name="Moy M."/>
            <person name="Murphy B."/>
            <person name="Murphy L."/>
            <person name="Muzny D.M."/>
            <person name="Nelson D.L."/>
            <person name="Nelson D.R."/>
            <person name="Nelson K.A."/>
            <person name="Nixon K."/>
            <person name="Nusskern D.R."/>
            <person name="Pacleb J.M."/>
            <person name="Palazzolo M."/>
            <person name="Pittman G.S."/>
            <person name="Pan S."/>
            <person name="Pollard J."/>
            <person name="Puri V."/>
            <person name="Reese M.G."/>
            <person name="Reinert K."/>
            <person name="Remington K."/>
            <person name="Saunders R.D.C."/>
            <person name="Scheeler F."/>
            <person name="Shen H."/>
            <person name="Shue B.C."/>
            <person name="Siden-Kiamos I."/>
            <person name="Simpson M."/>
            <person name="Skupski M.P."/>
            <person name="Smith T.J."/>
            <person name="Spier E."/>
            <person name="Spradling A.C."/>
            <person name="Stapleton M."/>
            <person name="Strong R."/>
            <person name="Sun E."/>
            <person name="Svirskas R."/>
            <person name="Tector C."/>
            <person name="Turner R."/>
            <person name="Venter E."/>
            <person name="Wang A.H."/>
            <person name="Wang X."/>
            <person name="Wang Z.-Y."/>
            <person name="Wassarman D.A."/>
            <person name="Weinstock G.M."/>
            <person name="Weissenbach J."/>
            <person name="Williams S.M."/>
            <person name="Woodage T."/>
            <person name="Worley K.C."/>
            <person name="Wu D."/>
            <person name="Yang S."/>
            <person name="Yao Q.A."/>
            <person name="Ye J."/>
            <person name="Yeh R.-F."/>
            <person name="Zaveri J.S."/>
            <person name="Zhan M."/>
            <person name="Zhang G."/>
            <person name="Zhao Q."/>
            <person name="Zheng L."/>
            <person name="Zheng X.H."/>
            <person name="Zhong F.N."/>
            <person name="Zhong W."/>
            <person name="Zhou X."/>
            <person name="Zhu S.C."/>
            <person name="Zhu X."/>
            <person name="Smith H.O."/>
            <person name="Gibbs R.A."/>
            <person name="Myers E.W."/>
            <person name="Rubin G.M."/>
            <person name="Venter J.C."/>
        </authorList>
    </citation>
    <scope>NUCLEOTIDE SEQUENCE [LARGE SCALE GENOMIC DNA]</scope>
    <source>
        <strain>Berkeley</strain>
    </source>
</reference>
<reference key="2">
    <citation type="journal article" date="2002" name="Genome Biol.">
        <title>Annotation of the Drosophila melanogaster euchromatic genome: a systematic review.</title>
        <authorList>
            <person name="Misra S."/>
            <person name="Crosby M.A."/>
            <person name="Mungall C.J."/>
            <person name="Matthews B.B."/>
            <person name="Campbell K.S."/>
            <person name="Hradecky P."/>
            <person name="Huang Y."/>
            <person name="Kaminker J.S."/>
            <person name="Millburn G.H."/>
            <person name="Prochnik S.E."/>
            <person name="Smith C.D."/>
            <person name="Tupy J.L."/>
            <person name="Whitfield E.J."/>
            <person name="Bayraktaroglu L."/>
            <person name="Berman B.P."/>
            <person name="Bettencourt B.R."/>
            <person name="Celniker S.E."/>
            <person name="de Grey A.D.N.J."/>
            <person name="Drysdale R.A."/>
            <person name="Harris N.L."/>
            <person name="Richter J."/>
            <person name="Russo S."/>
            <person name="Schroeder A.J."/>
            <person name="Shu S.Q."/>
            <person name="Stapleton M."/>
            <person name="Yamada C."/>
            <person name="Ashburner M."/>
            <person name="Gelbart W.M."/>
            <person name="Rubin G.M."/>
            <person name="Lewis S.E."/>
        </authorList>
    </citation>
    <scope>GENOME REANNOTATION</scope>
    <source>
        <strain>Berkeley</strain>
    </source>
</reference>
<reference key="3">
    <citation type="journal article" date="2000" name="Cell">
        <title>An olfactory sensory map in the fly brain.</title>
        <authorList>
            <person name="Vosshall L.B."/>
            <person name="Wong A.M."/>
            <person name="Axel R."/>
        </authorList>
    </citation>
    <scope>TISSUE SPECIFICITY</scope>
</reference>
<keyword id="KW-1003">Cell membrane</keyword>
<keyword id="KW-0472">Membrane</keyword>
<keyword id="KW-0552">Olfaction</keyword>
<keyword id="KW-0675">Receptor</keyword>
<keyword id="KW-1185">Reference proteome</keyword>
<keyword id="KW-0716">Sensory transduction</keyword>
<keyword id="KW-0807">Transducer</keyword>
<keyword id="KW-0812">Transmembrane</keyword>
<keyword id="KW-1133">Transmembrane helix</keyword>
<sequence length="411" mass="47474">MTKFFFKRLQTAPLDQEVSSLDASDYYYRIAFFLGWTPPKGALLRWIYSLWTLTTMWLGIVYLPLGLSLTYVKHFDRFTPTEFLTSLQVDINCIGNVIKSCVTYSQMWRFRRMNELISSLDKRCVTTTQRRIFHKMVARVNLIVILFLSTYLGFCFLTLFTSVFAGKAPWQLYNPLVDWRKGHWQLWIASILEYCVVSIGTMQELMSDTYAIVFISLFRCHLAILRDRIANLRQDPKLSEMEHYEQMVACIQDHRTIIQCSQIIRPILSITIFAQFMLVGIDLGLAAISILFFPNTIWTIMANVSFIVAICTESFPCCMLCEHLIEDSVHVSNALFHSNWITADRSYKSAVLYFLHRAQQPIQFTAGSIFPISVQSNIAVAKFAFTIITIVNQMNLGEKFFSDRSNGDINP</sequence>
<organism>
    <name type="scientific">Drosophila melanogaster</name>
    <name type="common">Fruit fly</name>
    <dbReference type="NCBI Taxonomy" id="7227"/>
    <lineage>
        <taxon>Eukaryota</taxon>
        <taxon>Metazoa</taxon>
        <taxon>Ecdysozoa</taxon>
        <taxon>Arthropoda</taxon>
        <taxon>Hexapoda</taxon>
        <taxon>Insecta</taxon>
        <taxon>Pterygota</taxon>
        <taxon>Neoptera</taxon>
        <taxon>Endopterygota</taxon>
        <taxon>Diptera</taxon>
        <taxon>Brachycera</taxon>
        <taxon>Muscomorpha</taxon>
        <taxon>Ephydroidea</taxon>
        <taxon>Drosophilidae</taxon>
        <taxon>Drosophila</taxon>
        <taxon>Sophophora</taxon>
    </lineage>
</organism>
<name>OR59C_DROME</name>
<proteinExistence type="evidence at transcript level"/>
<comment type="function">
    <text evidence="1">Odorant receptor which mediates acceptance or avoidance behavior, depending on its substrates. The odorant receptor repertoire encodes a large collection of odor stimuli that vary widely in identity, intensity, and duration. May form a complex with Orco to form odorant-sensing units, providing sensitive and prolonged odorant signaling and calcium permeability (By similarity).</text>
</comment>
<comment type="subunit">
    <text evidence="1">Interacts with Orco. Complexes exist early in the endomembrane system in olfactory sensory neurons (OSNs), coupling these complexes to the conserved ciliary trafficking pathway (By similarity).</text>
</comment>
<comment type="subcellular location">
    <subcellularLocation>
        <location evidence="1">Cell membrane</location>
        <topology evidence="1">Multi-pass membrane protein</topology>
    </subcellularLocation>
</comment>
<comment type="tissue specificity">
    <text evidence="3">Expressed in olfactory sensory neurons in the maxillary palp.</text>
</comment>
<comment type="miscellaneous">
    <text>The atypical heteromeric and topological design of the odorant receptors appears to be an insect-specific solution for odor recognition, making the OR/Orco complex an attractive target for the development of highly selective insect repellents to disrupt olfactory-mediated host-seeking behaviors of insect disease vectors. Odor-evoked OR currents are independent of known G-protein-coupled second messenger pathways.</text>
</comment>
<comment type="similarity">
    <text evidence="4">Belongs to the insect chemoreceptor superfamily. Heteromeric odorant receptor channel (TC 1.A.69) family. Or2a subfamily.</text>
</comment>